<gene>
    <name evidence="1" type="primary">rpsK</name>
    <name type="ordered locus">BMA10247_3502</name>
</gene>
<dbReference type="EMBL" id="CP000548">
    <property type="protein sequence ID" value="ABO05925.1"/>
    <property type="molecule type" value="Genomic_DNA"/>
</dbReference>
<dbReference type="RefSeq" id="WP_004197937.1">
    <property type="nucleotide sequence ID" value="NZ_CP007802.1"/>
</dbReference>
<dbReference type="SMR" id="A3MRX8"/>
<dbReference type="GeneID" id="98107136"/>
<dbReference type="KEGG" id="bmaz:BM44_3017"/>
<dbReference type="KEGG" id="bmn:BMA10247_3502"/>
<dbReference type="PATRIC" id="fig|320389.8.peg.3389"/>
<dbReference type="GO" id="GO:1990904">
    <property type="term" value="C:ribonucleoprotein complex"/>
    <property type="evidence" value="ECO:0007669"/>
    <property type="project" value="UniProtKB-KW"/>
</dbReference>
<dbReference type="GO" id="GO:0005840">
    <property type="term" value="C:ribosome"/>
    <property type="evidence" value="ECO:0007669"/>
    <property type="project" value="UniProtKB-KW"/>
</dbReference>
<dbReference type="GO" id="GO:0019843">
    <property type="term" value="F:rRNA binding"/>
    <property type="evidence" value="ECO:0007669"/>
    <property type="project" value="UniProtKB-UniRule"/>
</dbReference>
<dbReference type="GO" id="GO:0003735">
    <property type="term" value="F:structural constituent of ribosome"/>
    <property type="evidence" value="ECO:0007669"/>
    <property type="project" value="InterPro"/>
</dbReference>
<dbReference type="GO" id="GO:0006412">
    <property type="term" value="P:translation"/>
    <property type="evidence" value="ECO:0007669"/>
    <property type="project" value="UniProtKB-UniRule"/>
</dbReference>
<dbReference type="FunFam" id="3.30.420.80:FF:000001">
    <property type="entry name" value="30S ribosomal protein S11"/>
    <property type="match status" value="1"/>
</dbReference>
<dbReference type="Gene3D" id="3.30.420.80">
    <property type="entry name" value="Ribosomal protein S11"/>
    <property type="match status" value="1"/>
</dbReference>
<dbReference type="HAMAP" id="MF_01310">
    <property type="entry name" value="Ribosomal_uS11"/>
    <property type="match status" value="1"/>
</dbReference>
<dbReference type="InterPro" id="IPR001971">
    <property type="entry name" value="Ribosomal_uS11"/>
</dbReference>
<dbReference type="InterPro" id="IPR019981">
    <property type="entry name" value="Ribosomal_uS11_bac-type"/>
</dbReference>
<dbReference type="InterPro" id="IPR018102">
    <property type="entry name" value="Ribosomal_uS11_CS"/>
</dbReference>
<dbReference type="InterPro" id="IPR036967">
    <property type="entry name" value="Ribosomal_uS11_sf"/>
</dbReference>
<dbReference type="NCBIfam" id="NF003698">
    <property type="entry name" value="PRK05309.1"/>
    <property type="match status" value="1"/>
</dbReference>
<dbReference type="NCBIfam" id="TIGR03632">
    <property type="entry name" value="uS11_bact"/>
    <property type="match status" value="1"/>
</dbReference>
<dbReference type="PANTHER" id="PTHR11759">
    <property type="entry name" value="40S RIBOSOMAL PROTEIN S14/30S RIBOSOMAL PROTEIN S11"/>
    <property type="match status" value="1"/>
</dbReference>
<dbReference type="Pfam" id="PF00411">
    <property type="entry name" value="Ribosomal_S11"/>
    <property type="match status" value="1"/>
</dbReference>
<dbReference type="PIRSF" id="PIRSF002131">
    <property type="entry name" value="Ribosomal_S11"/>
    <property type="match status" value="1"/>
</dbReference>
<dbReference type="SUPFAM" id="SSF53137">
    <property type="entry name" value="Translational machinery components"/>
    <property type="match status" value="1"/>
</dbReference>
<dbReference type="PROSITE" id="PS00054">
    <property type="entry name" value="RIBOSOMAL_S11"/>
    <property type="match status" value="1"/>
</dbReference>
<comment type="function">
    <text evidence="1">Located on the platform of the 30S subunit, it bridges several disparate RNA helices of the 16S rRNA. Forms part of the Shine-Dalgarno cleft in the 70S ribosome.</text>
</comment>
<comment type="subunit">
    <text evidence="1">Part of the 30S ribosomal subunit. Interacts with proteins S7 and S18. Binds to IF-3.</text>
</comment>
<comment type="similarity">
    <text evidence="1">Belongs to the universal ribosomal protein uS11 family.</text>
</comment>
<organism>
    <name type="scientific">Burkholderia mallei (strain NCTC 10247)</name>
    <dbReference type="NCBI Taxonomy" id="320389"/>
    <lineage>
        <taxon>Bacteria</taxon>
        <taxon>Pseudomonadati</taxon>
        <taxon>Pseudomonadota</taxon>
        <taxon>Betaproteobacteria</taxon>
        <taxon>Burkholderiales</taxon>
        <taxon>Burkholderiaceae</taxon>
        <taxon>Burkholderia</taxon>
        <taxon>pseudomallei group</taxon>
    </lineage>
</organism>
<proteinExistence type="inferred from homology"/>
<evidence type="ECO:0000255" key="1">
    <source>
        <dbReference type="HAMAP-Rule" id="MF_01310"/>
    </source>
</evidence>
<evidence type="ECO:0000305" key="2"/>
<reference key="1">
    <citation type="journal article" date="2010" name="Genome Biol. Evol.">
        <title>Continuing evolution of Burkholderia mallei through genome reduction and large-scale rearrangements.</title>
        <authorList>
            <person name="Losada L."/>
            <person name="Ronning C.M."/>
            <person name="DeShazer D."/>
            <person name="Woods D."/>
            <person name="Fedorova N."/>
            <person name="Kim H.S."/>
            <person name="Shabalina S.A."/>
            <person name="Pearson T.R."/>
            <person name="Brinkac L."/>
            <person name="Tan P."/>
            <person name="Nandi T."/>
            <person name="Crabtree J."/>
            <person name="Badger J."/>
            <person name="Beckstrom-Sternberg S."/>
            <person name="Saqib M."/>
            <person name="Schutzer S.E."/>
            <person name="Keim P."/>
            <person name="Nierman W.C."/>
        </authorList>
    </citation>
    <scope>NUCLEOTIDE SEQUENCE [LARGE SCALE GENOMIC DNA]</scope>
    <source>
        <strain>NCTC 10247</strain>
    </source>
</reference>
<name>RS11_BURM7</name>
<protein>
    <recommendedName>
        <fullName evidence="1">Small ribosomal subunit protein uS11</fullName>
    </recommendedName>
    <alternativeName>
        <fullName evidence="2">30S ribosomal protein S11</fullName>
    </alternativeName>
</protein>
<keyword id="KW-0687">Ribonucleoprotein</keyword>
<keyword id="KW-0689">Ribosomal protein</keyword>
<keyword id="KW-0694">RNA-binding</keyword>
<keyword id="KW-0699">rRNA-binding</keyword>
<feature type="chain" id="PRO_1000051824" description="Small ribosomal subunit protein uS11">
    <location>
        <begin position="1"/>
        <end position="133"/>
    </location>
</feature>
<accession>A3MRX8</accession>
<sequence length="133" mass="14118">MAKASNTAAQRVRKKVKKNVAEGVVHVHASFNNTIITITDRQGNALAWATSGGQGFKGSRKSTPFAAQVAAESAGRVAMEYGVKNLEVRIKGPGPGRESAVRALHGLGIKITAISDVTPIPHNGCRPPKRRRI</sequence>